<reference key="1">
    <citation type="journal article" date="2004" name="Proc. Natl. Acad. Sci. U.S.A.">
        <title>Comparison of the genome of the oral pathogen Treponema denticola with other spirochete genomes.</title>
        <authorList>
            <person name="Seshadri R."/>
            <person name="Myers G.S.A."/>
            <person name="Tettelin H."/>
            <person name="Eisen J.A."/>
            <person name="Heidelberg J.F."/>
            <person name="Dodson R.J."/>
            <person name="Davidsen T.M."/>
            <person name="DeBoy R.T."/>
            <person name="Fouts D.E."/>
            <person name="Haft D.H."/>
            <person name="Selengut J."/>
            <person name="Ren Q."/>
            <person name="Brinkac L.M."/>
            <person name="Madupu R."/>
            <person name="Kolonay J.F."/>
            <person name="Durkin S.A."/>
            <person name="Daugherty S.C."/>
            <person name="Shetty J."/>
            <person name="Shvartsbeyn A."/>
            <person name="Gebregeorgis E."/>
            <person name="Geer K."/>
            <person name="Tsegaye G."/>
            <person name="Malek J.A."/>
            <person name="Ayodeji B."/>
            <person name="Shatsman S."/>
            <person name="McLeod M.P."/>
            <person name="Smajs D."/>
            <person name="Howell J.K."/>
            <person name="Pal S."/>
            <person name="Amin A."/>
            <person name="Vashisth P."/>
            <person name="McNeill T.Z."/>
            <person name="Xiang Q."/>
            <person name="Sodergren E."/>
            <person name="Baca E."/>
            <person name="Weinstock G.M."/>
            <person name="Norris S.J."/>
            <person name="Fraser C.M."/>
            <person name="Paulsen I.T."/>
        </authorList>
    </citation>
    <scope>NUCLEOTIDE SEQUENCE [LARGE SCALE GENOMIC DNA]</scope>
    <source>
        <strain>ATCC 35405 / DSM 14222 / CIP 103919 / JCM 8153 / KCTC 15104</strain>
    </source>
</reference>
<proteinExistence type="inferred from homology"/>
<protein>
    <recommendedName>
        <fullName evidence="1">Phosphatidylglycerol--prolipoprotein diacylglyceryl transferase</fullName>
        <ecNumber evidence="1">2.5.1.145</ecNumber>
    </recommendedName>
</protein>
<feature type="chain" id="PRO_0000172705" description="Phosphatidylglycerol--prolipoprotein diacylglyceryl transferase">
    <location>
        <begin position="1"/>
        <end position="338"/>
    </location>
</feature>
<feature type="transmembrane region" description="Helical" evidence="1">
    <location>
        <begin position="24"/>
        <end position="44"/>
    </location>
</feature>
<feature type="transmembrane region" description="Helical" evidence="1">
    <location>
        <begin position="67"/>
        <end position="87"/>
    </location>
</feature>
<feature type="transmembrane region" description="Helical" evidence="1">
    <location>
        <begin position="115"/>
        <end position="135"/>
    </location>
</feature>
<feature type="transmembrane region" description="Helical" evidence="1">
    <location>
        <begin position="141"/>
        <end position="161"/>
    </location>
</feature>
<feature type="transmembrane region" description="Helical" evidence="1">
    <location>
        <begin position="224"/>
        <end position="244"/>
    </location>
</feature>
<feature type="transmembrane region" description="Helical" evidence="1">
    <location>
        <begin position="252"/>
        <end position="272"/>
    </location>
</feature>
<feature type="transmembrane region" description="Helical" evidence="1">
    <location>
        <begin position="304"/>
        <end position="324"/>
    </location>
</feature>
<feature type="binding site" evidence="1">
    <location>
        <position position="162"/>
    </location>
    <ligand>
        <name>a 1,2-diacyl-sn-glycero-3-phospho-(1'-sn-glycerol)</name>
        <dbReference type="ChEBI" id="CHEBI:64716"/>
    </ligand>
</feature>
<keyword id="KW-0997">Cell inner membrane</keyword>
<keyword id="KW-1003">Cell membrane</keyword>
<keyword id="KW-0472">Membrane</keyword>
<keyword id="KW-1185">Reference proteome</keyword>
<keyword id="KW-0808">Transferase</keyword>
<keyword id="KW-0812">Transmembrane</keyword>
<keyword id="KW-1133">Transmembrane helix</keyword>
<organism>
    <name type="scientific">Treponema denticola (strain ATCC 35405 / DSM 14222 / CIP 103919 / JCM 8153 / KCTC 15104)</name>
    <dbReference type="NCBI Taxonomy" id="243275"/>
    <lineage>
        <taxon>Bacteria</taxon>
        <taxon>Pseudomonadati</taxon>
        <taxon>Spirochaetota</taxon>
        <taxon>Spirochaetia</taxon>
        <taxon>Spirochaetales</taxon>
        <taxon>Treponemataceae</taxon>
        <taxon>Treponema</taxon>
    </lineage>
</organism>
<comment type="function">
    <text evidence="1">Catalyzes the transfer of the diacylglyceryl group from phosphatidylglycerol to the sulfhydryl group of the N-terminal cysteine of a prolipoprotein, the first step in the formation of mature lipoproteins.</text>
</comment>
<comment type="catalytic activity">
    <reaction evidence="1">
        <text>L-cysteinyl-[prolipoprotein] + a 1,2-diacyl-sn-glycero-3-phospho-(1'-sn-glycerol) = an S-1,2-diacyl-sn-glyceryl-L-cysteinyl-[prolipoprotein] + sn-glycerol 1-phosphate + H(+)</text>
        <dbReference type="Rhea" id="RHEA:56712"/>
        <dbReference type="Rhea" id="RHEA-COMP:14679"/>
        <dbReference type="Rhea" id="RHEA-COMP:14680"/>
        <dbReference type="ChEBI" id="CHEBI:15378"/>
        <dbReference type="ChEBI" id="CHEBI:29950"/>
        <dbReference type="ChEBI" id="CHEBI:57685"/>
        <dbReference type="ChEBI" id="CHEBI:64716"/>
        <dbReference type="ChEBI" id="CHEBI:140658"/>
        <dbReference type="EC" id="2.5.1.145"/>
    </reaction>
</comment>
<comment type="pathway">
    <text evidence="1">Protein modification; lipoprotein biosynthesis (diacylglyceryl transfer).</text>
</comment>
<comment type="subcellular location">
    <subcellularLocation>
        <location evidence="1">Cell inner membrane</location>
        <topology evidence="1">Multi-pass membrane protein</topology>
    </subcellularLocation>
</comment>
<comment type="similarity">
    <text evidence="1">Belongs to the Lgt family.</text>
</comment>
<sequence length="338" mass="38424">MLLAIQYPSWLHPEIIPGLPFLRWYGLMYLVAFGIAYFLFSYQVKHGEFERYSGCQKAMTQDDISDLFIWGILGLILGARIFGTLVYNPETYLKAPWLIFWPFARDGAGNLTFTGFQGMSYHGGFIGGFLGVILWTKKSKFKFAAVADLMAVSIPLGYTFGRLGNFANGELYGRITTSKIGMIFPQTPISDRFYLAESWVRDFAEQAGLLVQDGASMINLPRHPSQLYEAFFEGIILWLILWLLRKKKPFDGFLVCVYTLGYGFFRFFIEYFRQPDANKGYPISFGTGAANIYVYESWKNISTGQILCSLMILASLAAMLILYLQEKKLKEKKGNIDG</sequence>
<gene>
    <name evidence="1" type="primary">lgt</name>
    <name type="ordered locus">TDE_1399</name>
</gene>
<evidence type="ECO:0000255" key="1">
    <source>
        <dbReference type="HAMAP-Rule" id="MF_01147"/>
    </source>
</evidence>
<name>LGT_TREDE</name>
<dbReference type="EC" id="2.5.1.145" evidence="1"/>
<dbReference type="EMBL" id="AE017226">
    <property type="protein sequence ID" value="AAS11916.1"/>
    <property type="molecule type" value="Genomic_DNA"/>
</dbReference>
<dbReference type="RefSeq" id="NP_972005.1">
    <property type="nucleotide sequence ID" value="NC_002967.9"/>
</dbReference>
<dbReference type="RefSeq" id="WP_002678985.1">
    <property type="nucleotide sequence ID" value="NC_002967.9"/>
</dbReference>
<dbReference type="SMR" id="P60974"/>
<dbReference type="STRING" id="243275.TDE_1399"/>
<dbReference type="PaxDb" id="243275-TDE_1399"/>
<dbReference type="GeneID" id="2741266"/>
<dbReference type="KEGG" id="tde:TDE_1399"/>
<dbReference type="PATRIC" id="fig|243275.7.peg.1341"/>
<dbReference type="eggNOG" id="COG0682">
    <property type="taxonomic scope" value="Bacteria"/>
</dbReference>
<dbReference type="HOGENOM" id="CLU_013386_1_0_12"/>
<dbReference type="OrthoDB" id="871140at2"/>
<dbReference type="UniPathway" id="UPA00664"/>
<dbReference type="Proteomes" id="UP000008212">
    <property type="component" value="Chromosome"/>
</dbReference>
<dbReference type="GO" id="GO:0005886">
    <property type="term" value="C:plasma membrane"/>
    <property type="evidence" value="ECO:0007669"/>
    <property type="project" value="UniProtKB-SubCell"/>
</dbReference>
<dbReference type="GO" id="GO:0008961">
    <property type="term" value="F:phosphatidylglycerol-prolipoprotein diacylglyceryl transferase activity"/>
    <property type="evidence" value="ECO:0007669"/>
    <property type="project" value="UniProtKB-UniRule"/>
</dbReference>
<dbReference type="GO" id="GO:0042158">
    <property type="term" value="P:lipoprotein biosynthetic process"/>
    <property type="evidence" value="ECO:0007669"/>
    <property type="project" value="UniProtKB-UniRule"/>
</dbReference>
<dbReference type="HAMAP" id="MF_01147">
    <property type="entry name" value="Lgt"/>
    <property type="match status" value="1"/>
</dbReference>
<dbReference type="InterPro" id="IPR001640">
    <property type="entry name" value="Lgt"/>
</dbReference>
<dbReference type="NCBIfam" id="TIGR00544">
    <property type="entry name" value="lgt"/>
    <property type="match status" value="1"/>
</dbReference>
<dbReference type="PANTHER" id="PTHR30589:SF0">
    <property type="entry name" value="PHOSPHATIDYLGLYCEROL--PROLIPOPROTEIN DIACYLGLYCERYL TRANSFERASE"/>
    <property type="match status" value="1"/>
</dbReference>
<dbReference type="PANTHER" id="PTHR30589">
    <property type="entry name" value="PROLIPOPROTEIN DIACYLGLYCERYL TRANSFERASE"/>
    <property type="match status" value="1"/>
</dbReference>
<dbReference type="Pfam" id="PF01790">
    <property type="entry name" value="LGT"/>
    <property type="match status" value="1"/>
</dbReference>
<dbReference type="PROSITE" id="PS01311">
    <property type="entry name" value="LGT"/>
    <property type="match status" value="1"/>
</dbReference>
<accession>P60974</accession>